<comment type="function">
    <text evidence="1">F(1)F(0) ATP synthase produces ATP from ADP in the presence of a proton or sodium gradient. F-type ATPases consist of two structural domains, F(1) containing the extramembraneous catalytic core and F(0) containing the membrane proton channel, linked together by a central stalk and a peripheral stalk. During catalysis, ATP synthesis in the catalytic domain of F(1) is coupled via a rotary mechanism of the central stalk subunits to proton translocation.</text>
</comment>
<comment type="function">
    <text evidence="1">This protein is part of the stalk that links CF(0) to CF(1). It either transmits conformational changes from CF(0) to CF(1) or is implicated in proton conduction.</text>
</comment>
<comment type="subunit">
    <text evidence="1">F-type ATPases have 2 components, F(1) - the catalytic core - and F(0) - the membrane proton channel. F(1) has five subunits: alpha(3), beta(3), gamma(1), delta(1), epsilon(1). F(0) has three main subunits: a(1), b(2) and c(10-14). The alpha and beta chains form an alternating ring which encloses part of the gamma chain. F(1) is attached to F(0) by a central stalk formed by the gamma and epsilon chains, while a peripheral stalk is formed by the delta and b chains.</text>
</comment>
<comment type="subcellular location">
    <subcellularLocation>
        <location evidence="1">Cell inner membrane</location>
        <topology evidence="1">Peripheral membrane protein</topology>
    </subcellularLocation>
</comment>
<comment type="similarity">
    <text evidence="1">Belongs to the ATPase delta chain family.</text>
</comment>
<feature type="chain" id="PRO_0000371116" description="ATP synthase subunit delta">
    <location>
        <begin position="1"/>
        <end position="177"/>
    </location>
</feature>
<accession>B5RFW0</accession>
<dbReference type="EMBL" id="AM933173">
    <property type="protein sequence ID" value="CAR39354.1"/>
    <property type="molecule type" value="Genomic_DNA"/>
</dbReference>
<dbReference type="RefSeq" id="WP_001288957.1">
    <property type="nucleotide sequence ID" value="NC_011274.1"/>
</dbReference>
<dbReference type="SMR" id="B5RFW0"/>
<dbReference type="KEGG" id="seg:SG3565"/>
<dbReference type="HOGENOM" id="CLU_085114_3_0_6"/>
<dbReference type="Proteomes" id="UP000008321">
    <property type="component" value="Chromosome"/>
</dbReference>
<dbReference type="GO" id="GO:0005886">
    <property type="term" value="C:plasma membrane"/>
    <property type="evidence" value="ECO:0007669"/>
    <property type="project" value="UniProtKB-SubCell"/>
</dbReference>
<dbReference type="GO" id="GO:0045259">
    <property type="term" value="C:proton-transporting ATP synthase complex"/>
    <property type="evidence" value="ECO:0007669"/>
    <property type="project" value="UniProtKB-KW"/>
</dbReference>
<dbReference type="GO" id="GO:0046933">
    <property type="term" value="F:proton-transporting ATP synthase activity, rotational mechanism"/>
    <property type="evidence" value="ECO:0007669"/>
    <property type="project" value="UniProtKB-UniRule"/>
</dbReference>
<dbReference type="FunFam" id="1.10.520.20:FF:000001">
    <property type="entry name" value="ATP synthase subunit delta"/>
    <property type="match status" value="1"/>
</dbReference>
<dbReference type="Gene3D" id="1.10.520.20">
    <property type="entry name" value="N-terminal domain of the delta subunit of the F1F0-ATP synthase"/>
    <property type="match status" value="1"/>
</dbReference>
<dbReference type="HAMAP" id="MF_01416">
    <property type="entry name" value="ATP_synth_delta_bact"/>
    <property type="match status" value="1"/>
</dbReference>
<dbReference type="InterPro" id="IPR026015">
    <property type="entry name" value="ATP_synth_OSCP/delta_N_sf"/>
</dbReference>
<dbReference type="InterPro" id="IPR020781">
    <property type="entry name" value="ATPase_OSCP/d_CS"/>
</dbReference>
<dbReference type="InterPro" id="IPR000711">
    <property type="entry name" value="ATPase_OSCP/dsu"/>
</dbReference>
<dbReference type="NCBIfam" id="TIGR01145">
    <property type="entry name" value="ATP_synt_delta"/>
    <property type="match status" value="1"/>
</dbReference>
<dbReference type="NCBIfam" id="NF004402">
    <property type="entry name" value="PRK05758.2-2"/>
    <property type="match status" value="1"/>
</dbReference>
<dbReference type="NCBIfam" id="NF004404">
    <property type="entry name" value="PRK05758.2-5"/>
    <property type="match status" value="1"/>
</dbReference>
<dbReference type="PANTHER" id="PTHR11910">
    <property type="entry name" value="ATP SYNTHASE DELTA CHAIN"/>
    <property type="match status" value="1"/>
</dbReference>
<dbReference type="Pfam" id="PF00213">
    <property type="entry name" value="OSCP"/>
    <property type="match status" value="1"/>
</dbReference>
<dbReference type="PRINTS" id="PR00125">
    <property type="entry name" value="ATPASEDELTA"/>
</dbReference>
<dbReference type="SUPFAM" id="SSF47928">
    <property type="entry name" value="N-terminal domain of the delta subunit of the F1F0-ATP synthase"/>
    <property type="match status" value="1"/>
</dbReference>
<dbReference type="PROSITE" id="PS00389">
    <property type="entry name" value="ATPASE_DELTA"/>
    <property type="match status" value="1"/>
</dbReference>
<reference key="1">
    <citation type="journal article" date="2008" name="Genome Res.">
        <title>Comparative genome analysis of Salmonella enteritidis PT4 and Salmonella gallinarum 287/91 provides insights into evolutionary and host adaptation pathways.</title>
        <authorList>
            <person name="Thomson N.R."/>
            <person name="Clayton D.J."/>
            <person name="Windhorst D."/>
            <person name="Vernikos G."/>
            <person name="Davidson S."/>
            <person name="Churcher C."/>
            <person name="Quail M.A."/>
            <person name="Stevens M."/>
            <person name="Jones M.A."/>
            <person name="Watson M."/>
            <person name="Barron A."/>
            <person name="Layton A."/>
            <person name="Pickard D."/>
            <person name="Kingsley R.A."/>
            <person name="Bignell A."/>
            <person name="Clark L."/>
            <person name="Harris B."/>
            <person name="Ormond D."/>
            <person name="Abdellah Z."/>
            <person name="Brooks K."/>
            <person name="Cherevach I."/>
            <person name="Chillingworth T."/>
            <person name="Woodward J."/>
            <person name="Norberczak H."/>
            <person name="Lord A."/>
            <person name="Arrowsmith C."/>
            <person name="Jagels K."/>
            <person name="Moule S."/>
            <person name="Mungall K."/>
            <person name="Saunders M."/>
            <person name="Whitehead S."/>
            <person name="Chabalgoity J.A."/>
            <person name="Maskell D."/>
            <person name="Humphreys T."/>
            <person name="Roberts M."/>
            <person name="Barrow P.A."/>
            <person name="Dougan G."/>
            <person name="Parkhill J."/>
        </authorList>
    </citation>
    <scope>NUCLEOTIDE SEQUENCE [LARGE SCALE GENOMIC DNA]</scope>
    <source>
        <strain>287/91 / NCTC 13346</strain>
    </source>
</reference>
<organism>
    <name type="scientific">Salmonella gallinarum (strain 287/91 / NCTC 13346)</name>
    <dbReference type="NCBI Taxonomy" id="550538"/>
    <lineage>
        <taxon>Bacteria</taxon>
        <taxon>Pseudomonadati</taxon>
        <taxon>Pseudomonadota</taxon>
        <taxon>Gammaproteobacteria</taxon>
        <taxon>Enterobacterales</taxon>
        <taxon>Enterobacteriaceae</taxon>
        <taxon>Salmonella</taxon>
    </lineage>
</organism>
<protein>
    <recommendedName>
        <fullName evidence="1">ATP synthase subunit delta</fullName>
    </recommendedName>
    <alternativeName>
        <fullName evidence="1">ATP synthase F(1) sector subunit delta</fullName>
    </alternativeName>
    <alternativeName>
        <fullName evidence="1">F-type ATPase subunit delta</fullName>
        <shortName evidence="1">F-ATPase subunit delta</shortName>
    </alternativeName>
</protein>
<name>ATPD_SALG2</name>
<sequence length="177" mass="19412">MSEFVTVARPYAKAAFDFAVEHQSVERWQDMLAFAAEVTKNEQMAELLSGALAPETLAESFIAVCGEQLDENGQNLIRVMAENNRLNALPDVLEQFIHLRAASEATSEVEVTSATALSEEQLSKISAAMEKRLSRKVKLNCKIDKSVMAGVIIRAGDMVIDGSVRGRLERLADVLQS</sequence>
<gene>
    <name evidence="1" type="primary">atpH</name>
    <name type="ordered locus">SG3565</name>
</gene>
<keyword id="KW-0066">ATP synthesis</keyword>
<keyword id="KW-0997">Cell inner membrane</keyword>
<keyword id="KW-1003">Cell membrane</keyword>
<keyword id="KW-0139">CF(1)</keyword>
<keyword id="KW-0375">Hydrogen ion transport</keyword>
<keyword id="KW-0406">Ion transport</keyword>
<keyword id="KW-0472">Membrane</keyword>
<keyword id="KW-0813">Transport</keyword>
<evidence type="ECO:0000255" key="1">
    <source>
        <dbReference type="HAMAP-Rule" id="MF_01416"/>
    </source>
</evidence>
<proteinExistence type="inferred from homology"/>